<dbReference type="EC" id="1.10.3.9" evidence="1"/>
<dbReference type="EMBL" id="CP000435">
    <property type="protein sequence ID" value="ABI45765.1"/>
    <property type="molecule type" value="Genomic_DNA"/>
</dbReference>
<dbReference type="EMBL" id="CP000435">
    <property type="protein sequence ID" value="ABI47615.1"/>
    <property type="molecule type" value="Genomic_DNA"/>
</dbReference>
<dbReference type="RefSeq" id="WP_011618836.1">
    <property type="nucleotide sequence ID" value="NC_008319.1"/>
</dbReference>
<dbReference type="SMR" id="Q0I6Z7"/>
<dbReference type="STRING" id="64471.sync_0897"/>
<dbReference type="KEGG" id="syg:sync_0897"/>
<dbReference type="KEGG" id="syg:sync_2586"/>
<dbReference type="eggNOG" id="ENOG502Z8JK">
    <property type="taxonomic scope" value="Bacteria"/>
</dbReference>
<dbReference type="HOGENOM" id="CLU_077965_0_0_3"/>
<dbReference type="OrthoDB" id="505356at2"/>
<dbReference type="Proteomes" id="UP000001961">
    <property type="component" value="Chromosome"/>
</dbReference>
<dbReference type="GO" id="GO:0009523">
    <property type="term" value="C:photosystem II"/>
    <property type="evidence" value="ECO:0007669"/>
    <property type="project" value="UniProtKB-KW"/>
</dbReference>
<dbReference type="GO" id="GO:0031676">
    <property type="term" value="C:plasma membrane-derived thylakoid membrane"/>
    <property type="evidence" value="ECO:0007669"/>
    <property type="project" value="UniProtKB-SubCell"/>
</dbReference>
<dbReference type="GO" id="GO:0016168">
    <property type="term" value="F:chlorophyll binding"/>
    <property type="evidence" value="ECO:0007669"/>
    <property type="project" value="UniProtKB-UniRule"/>
</dbReference>
<dbReference type="GO" id="GO:0045156">
    <property type="term" value="F:electron transporter, transferring electrons within the cyclic electron transport pathway of photosynthesis activity"/>
    <property type="evidence" value="ECO:0007669"/>
    <property type="project" value="InterPro"/>
</dbReference>
<dbReference type="GO" id="GO:0005506">
    <property type="term" value="F:iron ion binding"/>
    <property type="evidence" value="ECO:0007669"/>
    <property type="project" value="UniProtKB-UniRule"/>
</dbReference>
<dbReference type="GO" id="GO:0010242">
    <property type="term" value="F:oxygen evolving activity"/>
    <property type="evidence" value="ECO:0007669"/>
    <property type="project" value="UniProtKB-EC"/>
</dbReference>
<dbReference type="GO" id="GO:0009772">
    <property type="term" value="P:photosynthetic electron transport in photosystem II"/>
    <property type="evidence" value="ECO:0007669"/>
    <property type="project" value="InterPro"/>
</dbReference>
<dbReference type="FunFam" id="1.20.85.10:FF:000001">
    <property type="entry name" value="photosystem II D2 protein-like"/>
    <property type="match status" value="1"/>
</dbReference>
<dbReference type="Gene3D" id="1.20.85.10">
    <property type="entry name" value="Photosystem II protein D1-like"/>
    <property type="match status" value="1"/>
</dbReference>
<dbReference type="HAMAP" id="MF_01383">
    <property type="entry name" value="PSII_PsbD_D2"/>
    <property type="match status" value="1"/>
</dbReference>
<dbReference type="InterPro" id="IPR055266">
    <property type="entry name" value="D1/D2"/>
</dbReference>
<dbReference type="InterPro" id="IPR036854">
    <property type="entry name" value="Photo_II_D1/D2_sf"/>
</dbReference>
<dbReference type="InterPro" id="IPR000484">
    <property type="entry name" value="Photo_RC_L/M"/>
</dbReference>
<dbReference type="InterPro" id="IPR055265">
    <property type="entry name" value="Photo_RC_L/M_CS"/>
</dbReference>
<dbReference type="InterPro" id="IPR005868">
    <property type="entry name" value="PSII_PsbD/D2"/>
</dbReference>
<dbReference type="NCBIfam" id="TIGR01152">
    <property type="entry name" value="psbD"/>
    <property type="match status" value="1"/>
</dbReference>
<dbReference type="PANTHER" id="PTHR33149:SF12">
    <property type="entry name" value="PHOTOSYSTEM II D2 PROTEIN"/>
    <property type="match status" value="1"/>
</dbReference>
<dbReference type="PANTHER" id="PTHR33149">
    <property type="entry name" value="PHOTOSYSTEM II PROTEIN D1"/>
    <property type="match status" value="1"/>
</dbReference>
<dbReference type="Pfam" id="PF00124">
    <property type="entry name" value="Photo_RC"/>
    <property type="match status" value="1"/>
</dbReference>
<dbReference type="PRINTS" id="PR00256">
    <property type="entry name" value="REACTNCENTRE"/>
</dbReference>
<dbReference type="SUPFAM" id="SSF81483">
    <property type="entry name" value="Bacterial photosystem II reaction centre, L and M subunits"/>
    <property type="match status" value="1"/>
</dbReference>
<dbReference type="PROSITE" id="PS00244">
    <property type="entry name" value="REACTION_CENTER"/>
    <property type="match status" value="1"/>
</dbReference>
<proteinExistence type="inferred from homology"/>
<protein>
    <recommendedName>
        <fullName evidence="1">Photosystem II D2 protein</fullName>
        <shortName evidence="1">PSII D2 protein</shortName>
        <ecNumber evidence="1">1.10.3.9</ecNumber>
    </recommendedName>
    <alternativeName>
        <fullName evidence="1">Photosystem Q(A) protein</fullName>
    </alternativeName>
</protein>
<comment type="function">
    <text evidence="1">Photosystem II (PSII) is a light-driven water:plastoquinone oxidoreductase that uses light energy to abstract electrons from H(2)O, generating O(2) and a proton gradient subsequently used for ATP formation. It consists of a core antenna complex that captures photons, and an electron transfer chain that converts photonic excitation into a charge separation. The D1/D2 (PsbA/PsbD) reaction center heterodimer binds P680, the primary electron donor of PSII as well as several subsequent electron acceptors. D2 is needed for assembly of a stable PSII complex.</text>
</comment>
<comment type="catalytic activity">
    <reaction evidence="1">
        <text>2 a plastoquinone + 4 hnu + 2 H2O = 2 a plastoquinol + O2</text>
        <dbReference type="Rhea" id="RHEA:36359"/>
        <dbReference type="Rhea" id="RHEA-COMP:9561"/>
        <dbReference type="Rhea" id="RHEA-COMP:9562"/>
        <dbReference type="ChEBI" id="CHEBI:15377"/>
        <dbReference type="ChEBI" id="CHEBI:15379"/>
        <dbReference type="ChEBI" id="CHEBI:17757"/>
        <dbReference type="ChEBI" id="CHEBI:30212"/>
        <dbReference type="ChEBI" id="CHEBI:62192"/>
        <dbReference type="EC" id="1.10.3.9"/>
    </reaction>
</comment>
<comment type="cofactor">
    <text evidence="1">The D1/D2 heterodimer binds P680, chlorophylls that are the primary electron donor of PSII, and subsequent electron acceptors. It shares a non-heme iron and each subunit binds pheophytin, quinone, additional chlorophylls, carotenoids and lipids. There is also a Cl(-1) ion associated with D1 and D2, which is required for oxygen evolution. The PSII complex binds additional chlorophylls, carotenoids and specific lipids.</text>
</comment>
<comment type="subunit">
    <text evidence="1">PSII is composed of 1 copy each of membrane proteins PsbA, PsbB, PsbC, PsbD, PsbE, PsbF, PsbH, PsbI, PsbJ, PsbK, PsbL, PsbM, PsbT, PsbX, PsbY, PsbZ, Psb30/Ycf12, peripheral proteins PsbO, CyanoQ (PsbQ), PsbU, PsbV and a large number of cofactors. It forms dimeric complexes.</text>
</comment>
<comment type="subcellular location">
    <subcellularLocation>
        <location evidence="1">Cellular thylakoid membrane</location>
        <topology evidence="1">Multi-pass membrane protein</topology>
    </subcellularLocation>
</comment>
<comment type="miscellaneous">
    <text evidence="1">2 of the reaction center chlorophylls (ChlD1 and ChlD2) are entirely coordinated by water.</text>
</comment>
<comment type="similarity">
    <text evidence="1">Belongs to the reaction center PufL/M/PsbA/D family.</text>
</comment>
<keyword id="KW-0148">Chlorophyll</keyword>
<keyword id="KW-0157">Chromophore</keyword>
<keyword id="KW-0249">Electron transport</keyword>
<keyword id="KW-0408">Iron</keyword>
<keyword id="KW-0460">Magnesium</keyword>
<keyword id="KW-0472">Membrane</keyword>
<keyword id="KW-0479">Metal-binding</keyword>
<keyword id="KW-0560">Oxidoreductase</keyword>
<keyword id="KW-0602">Photosynthesis</keyword>
<keyword id="KW-0604">Photosystem II</keyword>
<keyword id="KW-1185">Reference proteome</keyword>
<keyword id="KW-0793">Thylakoid</keyword>
<keyword id="KW-0812">Transmembrane</keyword>
<keyword id="KW-1133">Transmembrane helix</keyword>
<keyword id="KW-0813">Transport</keyword>
<organism>
    <name type="scientific">Synechococcus sp. (strain CC9311)</name>
    <dbReference type="NCBI Taxonomy" id="64471"/>
    <lineage>
        <taxon>Bacteria</taxon>
        <taxon>Bacillati</taxon>
        <taxon>Cyanobacteriota</taxon>
        <taxon>Cyanophyceae</taxon>
        <taxon>Synechococcales</taxon>
        <taxon>Synechococcaceae</taxon>
        <taxon>Synechococcus</taxon>
    </lineage>
</organism>
<feature type="chain" id="PRO_0000359606" description="Photosystem II D2 protein">
    <location>
        <begin position="1"/>
        <end position="351"/>
    </location>
</feature>
<feature type="transmembrane region" description="Helical" evidence="1">
    <location>
        <begin position="39"/>
        <end position="59"/>
    </location>
</feature>
<feature type="transmembrane region" description="Helical" evidence="1">
    <location>
        <begin position="123"/>
        <end position="139"/>
    </location>
</feature>
<feature type="transmembrane region" description="Helical" evidence="1">
    <location>
        <begin position="151"/>
        <end position="164"/>
    </location>
</feature>
<feature type="transmembrane region" description="Helical" evidence="1">
    <location>
        <begin position="206"/>
        <end position="226"/>
    </location>
</feature>
<feature type="transmembrane region" description="Helical" evidence="1">
    <location>
        <begin position="277"/>
        <end position="293"/>
    </location>
</feature>
<feature type="binding site" description="axial binding residue" evidence="1">
    <location>
        <position position="116"/>
    </location>
    <ligand>
        <name>chlorophyll a</name>
        <dbReference type="ChEBI" id="CHEBI:58416"/>
        <label>ChlzD2</label>
    </ligand>
    <ligandPart>
        <name>Mg</name>
        <dbReference type="ChEBI" id="CHEBI:25107"/>
    </ligandPart>
</feature>
<feature type="binding site" evidence="1">
    <location>
        <position position="128"/>
    </location>
    <ligand>
        <name>pheophytin a</name>
        <dbReference type="ChEBI" id="CHEBI:136840"/>
        <label>D2</label>
    </ligand>
</feature>
<feature type="binding site" evidence="1">
    <location>
        <position position="141"/>
    </location>
    <ligand>
        <name>pheophytin a</name>
        <dbReference type="ChEBI" id="CHEBI:136840"/>
        <label>D2</label>
    </ligand>
</feature>
<feature type="binding site" description="axial binding residue" evidence="1">
    <location>
        <position position="196"/>
    </location>
    <ligand>
        <name>chlorophyll a</name>
        <dbReference type="ChEBI" id="CHEBI:58416"/>
        <label>PD2</label>
    </ligand>
    <ligandPart>
        <name>Mg</name>
        <dbReference type="ChEBI" id="CHEBI:25107"/>
    </ligandPart>
</feature>
<feature type="binding site" evidence="1">
    <location>
        <position position="213"/>
    </location>
    <ligand>
        <name>a plastoquinone</name>
        <dbReference type="ChEBI" id="CHEBI:17757"/>
        <label>Q(A)</label>
    </ligand>
</feature>
<feature type="binding site" evidence="1">
    <location>
        <position position="213"/>
    </location>
    <ligand>
        <name>Fe cation</name>
        <dbReference type="ChEBI" id="CHEBI:24875"/>
        <note>ligand shared with heterodimeric partner</note>
    </ligand>
</feature>
<feature type="binding site" evidence="1">
    <location>
        <position position="260"/>
    </location>
    <ligand>
        <name>a plastoquinone</name>
        <dbReference type="ChEBI" id="CHEBI:17757"/>
        <label>Q(A)</label>
    </ligand>
</feature>
<feature type="binding site" evidence="1">
    <location>
        <position position="267"/>
    </location>
    <ligand>
        <name>Fe cation</name>
        <dbReference type="ChEBI" id="CHEBI:24875"/>
        <note>ligand shared with heterodimeric partner</note>
    </ligand>
</feature>
<name>PSBD_SYNS3</name>
<reference key="1">
    <citation type="journal article" date="2006" name="Proc. Natl. Acad. Sci. U.S.A.">
        <title>Genome sequence of Synechococcus CC9311: insights into adaptation to a coastal environment.</title>
        <authorList>
            <person name="Palenik B."/>
            <person name="Ren Q."/>
            <person name="Dupont C.L."/>
            <person name="Myers G.S."/>
            <person name="Heidelberg J.F."/>
            <person name="Badger J.H."/>
            <person name="Madupu R."/>
            <person name="Nelson W.C."/>
            <person name="Brinkac L.M."/>
            <person name="Dodson R.J."/>
            <person name="Durkin A.S."/>
            <person name="Daugherty S.C."/>
            <person name="Sullivan S.A."/>
            <person name="Khouri H."/>
            <person name="Mohamoud Y."/>
            <person name="Halpin R."/>
            <person name="Paulsen I.T."/>
        </authorList>
    </citation>
    <scope>NUCLEOTIDE SEQUENCE [LARGE SCALE GENOMIC DNA]</scope>
    <source>
        <strain>CC9311</strain>
    </source>
</reference>
<sequence length="351" mass="39297">MTIAAGRMPQRGWFDVLDDWLKRDRFVFVGWSGILLLPTAYLSIGGWLTGTTFVTSWYTHGIASSYLEGCNFLTAAVSTPADAMGHSLLLLWGPEAQGDFVRWCQLGGLWAFVALHGAFALIGFMLRQFEIARLVGIRPYNAIAFSGPIAVFVSVFLMYPLGQSSWFFAPSFGVAAIFRFLLFLQGFHNWTLNPFHMMGVAGILGGALLCAIHGATVENTLFEDGEQSNTFKAFEPTQEEETYSMVTANRFWSQIFGIAFSNKRWLHFFMLFVPVMGLWTSAIGIIGLALNLRAYDFVSQEIRAAEDPEFETFYTKNILLNEGLRAWMAPADQPHENFVFPEEVLPRGNAL</sequence>
<evidence type="ECO:0000255" key="1">
    <source>
        <dbReference type="HAMAP-Rule" id="MF_01383"/>
    </source>
</evidence>
<accession>Q0I6Z7</accession>
<gene>
    <name evidence="1" type="primary">psbD1</name>
    <name type="ordered locus">sync_0897</name>
</gene>
<gene>
    <name evidence="1" type="primary">psbD2</name>
    <name type="ordered locus">sync_2586</name>
</gene>